<keyword id="KW-0240">DNA-directed RNA polymerase</keyword>
<keyword id="KW-0548">Nucleotidyltransferase</keyword>
<keyword id="KW-0804">Transcription</keyword>
<keyword id="KW-0808">Transferase</keyword>
<proteinExistence type="inferred from homology"/>
<name>RPOB_UREP2</name>
<feature type="chain" id="PRO_1000086388" description="DNA-directed RNA polymerase subunit beta">
    <location>
        <begin position="1"/>
        <end position="1434"/>
    </location>
</feature>
<reference key="1">
    <citation type="submission" date="2008-02" db="EMBL/GenBank/DDBJ databases">
        <title>Genome sequence of Ureaplasma parvum serovar 3.</title>
        <authorList>
            <person name="Methe B.A."/>
            <person name="Glass J."/>
            <person name="Waites K."/>
            <person name="Shrivastava S."/>
        </authorList>
    </citation>
    <scope>NUCLEOTIDE SEQUENCE [LARGE SCALE GENOMIC DNA]</scope>
    <source>
        <strain>ATCC 27815 / 27 / NCTC 11736</strain>
    </source>
</reference>
<evidence type="ECO:0000255" key="1">
    <source>
        <dbReference type="HAMAP-Rule" id="MF_01321"/>
    </source>
</evidence>
<comment type="function">
    <text evidence="1">DNA-dependent RNA polymerase catalyzes the transcription of DNA into RNA using the four ribonucleoside triphosphates as substrates.</text>
</comment>
<comment type="catalytic activity">
    <reaction evidence="1">
        <text>RNA(n) + a ribonucleoside 5'-triphosphate = RNA(n+1) + diphosphate</text>
        <dbReference type="Rhea" id="RHEA:21248"/>
        <dbReference type="Rhea" id="RHEA-COMP:14527"/>
        <dbReference type="Rhea" id="RHEA-COMP:17342"/>
        <dbReference type="ChEBI" id="CHEBI:33019"/>
        <dbReference type="ChEBI" id="CHEBI:61557"/>
        <dbReference type="ChEBI" id="CHEBI:140395"/>
        <dbReference type="EC" id="2.7.7.6"/>
    </reaction>
</comment>
<comment type="subunit">
    <text evidence="1">The RNAP catalytic core consists of 2 alpha, 1 beta, 1 beta' and 1 omega subunit. When a sigma factor is associated with the core the holoenzyme is formed, which can initiate transcription.</text>
</comment>
<comment type="similarity">
    <text evidence="1">Belongs to the RNA polymerase beta chain family.</text>
</comment>
<gene>
    <name evidence="1" type="primary">rpoB</name>
    <name type="ordered locus">UPA3_0194</name>
</gene>
<sequence>MQNNKNYTEKFITDKVMRRDYSKIKSNFEGPNLLEIQVESFKRFMEKDLKEVISSIFPLKSPQGKYTLAFKGLKIKQPTKDESACRDEGKTFETPIYIDLELTDNYTGEVKRAQRNTKTGEDGIYLGAIPKMTEKGTFVINGIEKFVISQIVRSPGIYVLGKSSIKLNGSRKRLFEGKICEIYPSKGTLMLGYIPKDRHNIQIVARDSSGDNAQTFSVTTLLKAFGLTSAEILKIFNNEKEIRESLEIEKYAPEYIFENSQENEIIFKIYSDAHDIHEKADRRESNNKLKEEYIEQGSPLLSKLKQLIFNYVEKNDEIDALLHENKDVEDASFIKNNKKLYDEREEIINCIISEKAAKDIVELLGINIKNIETLRHLGKASYQIALQQHFFNKRLYDISSAGRYKFEKKLLLSERLYQKVIANDIIDKKNNILIPKDTLITKEHIELIKKESRDKNIKWTKKINLLPTALESEIEQFLEYESIAVYKDNDLRDETTEIVGLASGCKLQTLTVADLVATTSYIYNLNYEIGEFDDIDHLGNKRLKLIHELLRARIATSMARIEKFINEKLAISDGSSNNITNVNDKGIDTELDREIEESDMSDEEKKKAISVKSIINTKQFQSLVKDFFNSHQLIQFIDQQNPLAELTNKRRISAMGPGGISREDPNLDIRDVHHSHYSRICPIETPEGMNIGLIMSLASLAKVDENGFIVAPYYVVEDGVVKEDYKYLTAHEDDNYIIAESSVQLDENKRILDEQVVARYRGSTGLFSPNEVDFIDIVPKQVVSIAASAIPFIENDDGARALMGSNMQRQATPLIKPYAPIVGTGTEFKIAHDSGMAVVAKNDGVVEFVDSQKIIIRNDNDKLDDYKLIKYRKSNQDTCNNQIPIVKVGQRVHKSETIGDGPAMQNGELALGRNILVGYTTWRGYNFEDAIIISERLVDQDVFTSIHIDEHTIQCMKTKNGDEEITRDMPNVSDTAKRFLDNQGIVLVGAEVHEGDVLVGKTTPRGNVETAPEDRLLQTIFGDKSKTVKDSSLKVKHGQEGIVAAVKRIKSSDENGSELPDDVIEIIKVYIVQKRKIQVGDKMAGRHGNKGIVSKVVPIQDMPFLKDGTPLDIMLNPLGVPSRMNIGQILELHLGYAAAEIGKKQLIQIAIDQLGYEKYISLFGINEIIAKKLYENISNLIKHKQAKQAKDIDLIDVTIILKELGLSYDDIGIKISTPVFDGANHDDIVSIMNEANIDIENNKGKQVLYDGRTGEPFDGLISVGLTYMLKLDHMVDDKIHSRSVGPYSKITQQPLGGKSQNGGQRFGEMEVWALEAYGAAYNLLEILTIKSDDVQGRNQAYNAIIKGHDVVADGMPESFKLLTKQMQGLGLCITVETKDDRMVDINEYTLNQNRLNNDDDEVILDENLKEINDSNEEIFNTNFNNNDYDDEENF</sequence>
<dbReference type="EC" id="2.7.7.6" evidence="1"/>
<dbReference type="EMBL" id="CP000942">
    <property type="protein sequence ID" value="ACA32784.1"/>
    <property type="molecule type" value="Genomic_DNA"/>
</dbReference>
<dbReference type="RefSeq" id="WP_006688964.1">
    <property type="nucleotide sequence ID" value="NC_010503.1"/>
</dbReference>
<dbReference type="SMR" id="B1AIH5"/>
<dbReference type="GeneID" id="29672197"/>
<dbReference type="KEGG" id="upa:UPA3_0194"/>
<dbReference type="HOGENOM" id="CLU_000524_4_3_14"/>
<dbReference type="Proteomes" id="UP000002162">
    <property type="component" value="Chromosome"/>
</dbReference>
<dbReference type="GO" id="GO:0000428">
    <property type="term" value="C:DNA-directed RNA polymerase complex"/>
    <property type="evidence" value="ECO:0007669"/>
    <property type="project" value="UniProtKB-KW"/>
</dbReference>
<dbReference type="GO" id="GO:0003677">
    <property type="term" value="F:DNA binding"/>
    <property type="evidence" value="ECO:0007669"/>
    <property type="project" value="UniProtKB-UniRule"/>
</dbReference>
<dbReference type="GO" id="GO:0003899">
    <property type="term" value="F:DNA-directed RNA polymerase activity"/>
    <property type="evidence" value="ECO:0007669"/>
    <property type="project" value="UniProtKB-UniRule"/>
</dbReference>
<dbReference type="GO" id="GO:0032549">
    <property type="term" value="F:ribonucleoside binding"/>
    <property type="evidence" value="ECO:0007669"/>
    <property type="project" value="InterPro"/>
</dbReference>
<dbReference type="GO" id="GO:0006351">
    <property type="term" value="P:DNA-templated transcription"/>
    <property type="evidence" value="ECO:0007669"/>
    <property type="project" value="UniProtKB-UniRule"/>
</dbReference>
<dbReference type="CDD" id="cd00653">
    <property type="entry name" value="RNA_pol_B_RPB2"/>
    <property type="match status" value="1"/>
</dbReference>
<dbReference type="Gene3D" id="2.40.50.100">
    <property type="match status" value="1"/>
</dbReference>
<dbReference type="Gene3D" id="3.90.1100.10">
    <property type="match status" value="2"/>
</dbReference>
<dbReference type="Gene3D" id="2.30.150.10">
    <property type="entry name" value="DNA-directed RNA polymerase, beta subunit, external 1 domain"/>
    <property type="match status" value="1"/>
</dbReference>
<dbReference type="Gene3D" id="2.40.270.10">
    <property type="entry name" value="DNA-directed RNA polymerase, subunit 2, domain 6"/>
    <property type="match status" value="2"/>
</dbReference>
<dbReference type="Gene3D" id="3.90.1800.10">
    <property type="entry name" value="RNA polymerase alpha subunit dimerisation domain"/>
    <property type="match status" value="1"/>
</dbReference>
<dbReference type="Gene3D" id="3.90.1110.10">
    <property type="entry name" value="RNA polymerase Rpb2, domain 2"/>
    <property type="match status" value="1"/>
</dbReference>
<dbReference type="HAMAP" id="MF_01321">
    <property type="entry name" value="RNApol_bact_RpoB"/>
    <property type="match status" value="1"/>
</dbReference>
<dbReference type="InterPro" id="IPR042107">
    <property type="entry name" value="DNA-dir_RNA_pol_bsu_ext_1_sf"/>
</dbReference>
<dbReference type="InterPro" id="IPR019462">
    <property type="entry name" value="DNA-dir_RNA_pol_bsu_external_1"/>
</dbReference>
<dbReference type="InterPro" id="IPR015712">
    <property type="entry name" value="DNA-dir_RNA_pol_su2"/>
</dbReference>
<dbReference type="InterPro" id="IPR007120">
    <property type="entry name" value="DNA-dir_RNAP_su2_dom"/>
</dbReference>
<dbReference type="InterPro" id="IPR037033">
    <property type="entry name" value="DNA-dir_RNAP_su2_hyb_sf"/>
</dbReference>
<dbReference type="InterPro" id="IPR010243">
    <property type="entry name" value="RNA_pol_bsu_bac"/>
</dbReference>
<dbReference type="InterPro" id="IPR007121">
    <property type="entry name" value="RNA_pol_bsu_CS"/>
</dbReference>
<dbReference type="InterPro" id="IPR007644">
    <property type="entry name" value="RNA_pol_bsu_protrusion"/>
</dbReference>
<dbReference type="InterPro" id="IPR007642">
    <property type="entry name" value="RNA_pol_Rpb2_2"/>
</dbReference>
<dbReference type="InterPro" id="IPR037034">
    <property type="entry name" value="RNA_pol_Rpb2_2_sf"/>
</dbReference>
<dbReference type="InterPro" id="IPR007645">
    <property type="entry name" value="RNA_pol_Rpb2_3"/>
</dbReference>
<dbReference type="InterPro" id="IPR007641">
    <property type="entry name" value="RNA_pol_Rpb2_7"/>
</dbReference>
<dbReference type="NCBIfam" id="NF001616">
    <property type="entry name" value="PRK00405.1"/>
    <property type="match status" value="1"/>
</dbReference>
<dbReference type="PANTHER" id="PTHR20856">
    <property type="entry name" value="DNA-DIRECTED RNA POLYMERASE I SUBUNIT 2"/>
    <property type="match status" value="1"/>
</dbReference>
<dbReference type="Pfam" id="PF04563">
    <property type="entry name" value="RNA_pol_Rpb2_1"/>
    <property type="match status" value="1"/>
</dbReference>
<dbReference type="Pfam" id="PF04561">
    <property type="entry name" value="RNA_pol_Rpb2_2"/>
    <property type="match status" value="1"/>
</dbReference>
<dbReference type="Pfam" id="PF04565">
    <property type="entry name" value="RNA_pol_Rpb2_3"/>
    <property type="match status" value="1"/>
</dbReference>
<dbReference type="Pfam" id="PF10385">
    <property type="entry name" value="RNA_pol_Rpb2_45"/>
    <property type="match status" value="1"/>
</dbReference>
<dbReference type="Pfam" id="PF00562">
    <property type="entry name" value="RNA_pol_Rpb2_6"/>
    <property type="match status" value="1"/>
</dbReference>
<dbReference type="Pfam" id="PF04560">
    <property type="entry name" value="RNA_pol_Rpb2_7"/>
    <property type="match status" value="1"/>
</dbReference>
<dbReference type="SUPFAM" id="SSF64484">
    <property type="entry name" value="beta and beta-prime subunits of DNA dependent RNA-polymerase"/>
    <property type="match status" value="1"/>
</dbReference>
<dbReference type="PROSITE" id="PS01166">
    <property type="entry name" value="RNA_POL_BETA"/>
    <property type="match status" value="1"/>
</dbReference>
<accession>B1AIH5</accession>
<protein>
    <recommendedName>
        <fullName evidence="1">DNA-directed RNA polymerase subunit beta</fullName>
        <shortName evidence="1">RNAP subunit beta</shortName>
        <ecNumber evidence="1">2.7.7.6</ecNumber>
    </recommendedName>
    <alternativeName>
        <fullName evidence="1">RNA polymerase subunit beta</fullName>
    </alternativeName>
    <alternativeName>
        <fullName evidence="1">Transcriptase subunit beta</fullName>
    </alternativeName>
</protein>
<organism>
    <name type="scientific">Ureaplasma parvum serovar 3 (strain ATCC 27815 / 27 / NCTC 11736)</name>
    <dbReference type="NCBI Taxonomy" id="505682"/>
    <lineage>
        <taxon>Bacteria</taxon>
        <taxon>Bacillati</taxon>
        <taxon>Mycoplasmatota</taxon>
        <taxon>Mycoplasmoidales</taxon>
        <taxon>Mycoplasmoidaceae</taxon>
        <taxon>Ureaplasma</taxon>
    </lineage>
</organism>